<sequence length="341" mass="36442">MSKRVRSSLILPAVCGLGLAAVLLSSCSSKAPQQPARQAGISGPGDYSRPHRDGAPWWDVDVSRIPDAVPMPHNGSVKANPYTVLGKTYYPMNDARAYRMVGTASWYGTKFHGQATANGETYDLYGMTAAHKTLPLPSYVRVTNLDNGKSVIVRVNDRGPFYSDRVIDLSFAAAKKLGYAETGTARVKVEGIDPVQWWAQRGRPAPMVLAQPKQAVAQAPAATQTQAVAMAQPIETYTPPPAQHAAAVLPVQIDSKKNASLPADGLYLQVGAFANPDAAELLKAKLSGVTAAPVFISSVVRNQQILHRVRLGPIGSADEVSRTQDSIRVANLGQPTLVRPD</sequence>
<gene>
    <name evidence="1 3" type="primary">rlpA</name>
    <name evidence="5" type="ordered locus">PA14_12090</name>
</gene>
<accession>A0A0H2ZFV1</accession>
<feature type="signal peptide" evidence="1">
    <location>
        <begin position="1"/>
        <end position="26"/>
    </location>
</feature>
<feature type="chain" id="PRO_5002603392" description="Endolytic peptidoglycan transglycosylase RlpA">
    <location>
        <begin position="27"/>
        <end position="341"/>
    </location>
</feature>
<feature type="domain" description="SPOR" evidence="1">
    <location>
        <begin position="260"/>
        <end position="341"/>
    </location>
</feature>
<feature type="lipid moiety-binding region" description="N-palmitoyl cysteine" evidence="1">
    <location>
        <position position="27"/>
    </location>
</feature>
<feature type="lipid moiety-binding region" description="S-diacylglycerol cysteine" evidence="1">
    <location>
        <position position="27"/>
    </location>
</feature>
<feature type="mutagenesis site" description="Strong decrease in transglycosylase activity." evidence="2">
    <original>E</original>
    <variation>A</variation>
    <location>
        <position position="120"/>
    </location>
</feature>
<feature type="mutagenesis site" description="Strong decrease in transglycosylase activity." evidence="2">
    <original>D</original>
    <variation>A</variation>
    <location>
        <position position="123"/>
    </location>
</feature>
<feature type="mutagenesis site" description="Strong decrease in transglycosylase activity." evidence="2">
    <original>H</original>
    <variation>A</variation>
    <location>
        <position position="131"/>
    </location>
</feature>
<feature type="mutagenesis site" description="Lack of transglycosylase activity." evidence="2">
    <original>D</original>
    <variation>N</variation>
    <location>
        <position position="157"/>
    </location>
</feature>
<keyword id="KW-1003">Cell membrane</keyword>
<keyword id="KW-0961">Cell wall biogenesis/degradation</keyword>
<keyword id="KW-0449">Lipoprotein</keyword>
<keyword id="KW-0456">Lyase</keyword>
<keyword id="KW-0472">Membrane</keyword>
<keyword id="KW-0564">Palmitate</keyword>
<keyword id="KW-0732">Signal</keyword>
<proteinExistence type="evidence at protein level"/>
<organism>
    <name type="scientific">Pseudomonas aeruginosa (strain UCBPP-PA14)</name>
    <dbReference type="NCBI Taxonomy" id="208963"/>
    <lineage>
        <taxon>Bacteria</taxon>
        <taxon>Pseudomonadati</taxon>
        <taxon>Pseudomonadota</taxon>
        <taxon>Gammaproteobacteria</taxon>
        <taxon>Pseudomonadales</taxon>
        <taxon>Pseudomonadaceae</taxon>
        <taxon>Pseudomonas</taxon>
    </lineage>
</organism>
<evidence type="ECO:0000255" key="1">
    <source>
        <dbReference type="HAMAP-Rule" id="MF_02071"/>
    </source>
</evidence>
<evidence type="ECO:0000269" key="2">
    <source>
    </source>
</evidence>
<evidence type="ECO:0000303" key="3">
    <source>
    </source>
</evidence>
<evidence type="ECO:0000305" key="4"/>
<evidence type="ECO:0000312" key="5">
    <source>
        <dbReference type="EMBL" id="ABJ13274.1"/>
    </source>
</evidence>
<comment type="function">
    <text evidence="2">Lytic transglycosylase with a strong preference for naked glycan strands that lack stem peptides. Required for efficient separation of daughter cells and maintenance of rod shape.</text>
</comment>
<comment type="subcellular location">
    <subcellularLocation>
        <location evidence="1">Cell membrane</location>
        <topology evidence="1">Lipid-anchor</topology>
    </subcellularLocation>
    <text evidence="2">Localizes at the septal ring.</text>
</comment>
<comment type="domain">
    <text evidence="2">The SPOR domain is important for normal localization, but not for cell division or rod shape.</text>
</comment>
<comment type="disruption phenotype">
    <text evidence="2">Mutants form chains of short, fat cells when grown in low osmotic strength media.</text>
</comment>
<comment type="similarity">
    <text evidence="1">Belongs to the RlpA family.</text>
</comment>
<dbReference type="EC" id="4.2.2.-" evidence="1 2"/>
<dbReference type="EMBL" id="CP000438">
    <property type="protein sequence ID" value="ABJ13274.1"/>
    <property type="molecule type" value="Genomic_DNA"/>
</dbReference>
<dbReference type="RefSeq" id="WP_003093184.1">
    <property type="nucleotide sequence ID" value="NZ_CP034244.1"/>
</dbReference>
<dbReference type="SMR" id="A0A0H2ZFV1"/>
<dbReference type="KEGG" id="pau:PA14_12090"/>
<dbReference type="HOGENOM" id="CLU_042923_3_2_6"/>
<dbReference type="BioCyc" id="PAER208963:G1G74-1004-MONOMER"/>
<dbReference type="Proteomes" id="UP000000653">
    <property type="component" value="Chromosome"/>
</dbReference>
<dbReference type="GO" id="GO:0009279">
    <property type="term" value="C:cell outer membrane"/>
    <property type="evidence" value="ECO:0007669"/>
    <property type="project" value="TreeGrafter"/>
</dbReference>
<dbReference type="GO" id="GO:0005886">
    <property type="term" value="C:plasma membrane"/>
    <property type="evidence" value="ECO:0007669"/>
    <property type="project" value="UniProtKB-SubCell"/>
</dbReference>
<dbReference type="GO" id="GO:0008932">
    <property type="term" value="F:lytic endotransglycosylase activity"/>
    <property type="evidence" value="ECO:0007669"/>
    <property type="project" value="UniProtKB-UniRule"/>
</dbReference>
<dbReference type="GO" id="GO:0042834">
    <property type="term" value="F:peptidoglycan binding"/>
    <property type="evidence" value="ECO:0007669"/>
    <property type="project" value="InterPro"/>
</dbReference>
<dbReference type="GO" id="GO:0071555">
    <property type="term" value="P:cell wall organization"/>
    <property type="evidence" value="ECO:0007669"/>
    <property type="project" value="UniProtKB-KW"/>
</dbReference>
<dbReference type="GO" id="GO:0000270">
    <property type="term" value="P:peptidoglycan metabolic process"/>
    <property type="evidence" value="ECO:0007669"/>
    <property type="project" value="UniProtKB-UniRule"/>
</dbReference>
<dbReference type="CDD" id="cd22268">
    <property type="entry name" value="DPBB_RlpA-like"/>
    <property type="match status" value="1"/>
</dbReference>
<dbReference type="FunFam" id="2.40.40.10:FF:000003">
    <property type="entry name" value="Endolytic peptidoglycan transglycosylase RlpA"/>
    <property type="match status" value="1"/>
</dbReference>
<dbReference type="Gene3D" id="2.40.40.10">
    <property type="entry name" value="RlpA-like domain"/>
    <property type="match status" value="1"/>
</dbReference>
<dbReference type="Gene3D" id="3.30.70.1070">
    <property type="entry name" value="Sporulation related repeat"/>
    <property type="match status" value="1"/>
</dbReference>
<dbReference type="HAMAP" id="MF_02071">
    <property type="entry name" value="RlpA"/>
    <property type="match status" value="1"/>
</dbReference>
<dbReference type="InterPro" id="IPR034718">
    <property type="entry name" value="RlpA"/>
</dbReference>
<dbReference type="InterPro" id="IPR009009">
    <property type="entry name" value="RlpA-like_DPBB"/>
</dbReference>
<dbReference type="InterPro" id="IPR036908">
    <property type="entry name" value="RlpA-like_sf"/>
</dbReference>
<dbReference type="InterPro" id="IPR012997">
    <property type="entry name" value="RplA"/>
</dbReference>
<dbReference type="InterPro" id="IPR007730">
    <property type="entry name" value="SPOR-like_dom"/>
</dbReference>
<dbReference type="InterPro" id="IPR036680">
    <property type="entry name" value="SPOR-like_sf"/>
</dbReference>
<dbReference type="NCBIfam" id="TIGR00413">
    <property type="entry name" value="rlpA"/>
    <property type="match status" value="1"/>
</dbReference>
<dbReference type="PANTHER" id="PTHR34183">
    <property type="entry name" value="ENDOLYTIC PEPTIDOGLYCAN TRANSGLYCOSYLASE RLPA"/>
    <property type="match status" value="1"/>
</dbReference>
<dbReference type="PANTHER" id="PTHR34183:SF1">
    <property type="entry name" value="ENDOLYTIC PEPTIDOGLYCAN TRANSGLYCOSYLASE RLPA"/>
    <property type="match status" value="1"/>
</dbReference>
<dbReference type="Pfam" id="PF03330">
    <property type="entry name" value="DPBB_1"/>
    <property type="match status" value="1"/>
</dbReference>
<dbReference type="Pfam" id="PF05036">
    <property type="entry name" value="SPOR"/>
    <property type="match status" value="1"/>
</dbReference>
<dbReference type="SUPFAM" id="SSF50685">
    <property type="entry name" value="Barwin-like endoglucanases"/>
    <property type="match status" value="1"/>
</dbReference>
<dbReference type="SUPFAM" id="SSF110997">
    <property type="entry name" value="Sporulation related repeat"/>
    <property type="match status" value="1"/>
</dbReference>
<dbReference type="PROSITE" id="PS51257">
    <property type="entry name" value="PROKAR_LIPOPROTEIN"/>
    <property type="match status" value="1"/>
</dbReference>
<dbReference type="PROSITE" id="PS51724">
    <property type="entry name" value="SPOR"/>
    <property type="match status" value="1"/>
</dbReference>
<reference key="1">
    <citation type="journal article" date="2006" name="Genome Biol.">
        <title>Genomic analysis reveals that Pseudomonas aeruginosa virulence is combinatorial.</title>
        <authorList>
            <person name="Lee D.G."/>
            <person name="Urbach J.M."/>
            <person name="Wu G."/>
            <person name="Liberati N.T."/>
            <person name="Feinbaum R.L."/>
            <person name="Miyata S."/>
            <person name="Diggins L.T."/>
            <person name="He J."/>
            <person name="Saucier M."/>
            <person name="Deziel E."/>
            <person name="Friedman L."/>
            <person name="Li L."/>
            <person name="Grills G."/>
            <person name="Montgomery K."/>
            <person name="Kucherlapati R."/>
            <person name="Rahme L.G."/>
            <person name="Ausubel F.M."/>
        </authorList>
    </citation>
    <scope>NUCLEOTIDE SEQUENCE [LARGE SCALE GENOMIC DNA]</scope>
    <source>
        <strain>UCBPP-PA14</strain>
    </source>
</reference>
<reference key="2">
    <citation type="journal article" date="2014" name="Mol. Microbiol.">
        <title>The bacterial septal ring protein RlpA is a lytic transglycosylase that contributes to rod shape and daughter cell separation in Pseudomonas aeruginosa.</title>
        <authorList>
            <person name="Jorgenson M.A."/>
            <person name="Chen Y."/>
            <person name="Yahashiri A."/>
            <person name="Popham D.L."/>
            <person name="Weiss D.S."/>
        </authorList>
    </citation>
    <scope>FUNCTION</scope>
    <scope>CATALYTIC ACTIVITY</scope>
    <scope>SUBCELLULAR LOCATION</scope>
    <scope>DOMAIN</scope>
    <scope>DISRUPTION PHENOTYPE</scope>
    <scope>MUTAGENESIS OF GLU-120; ASP-123; HIS-131 AND ASP-157</scope>
</reference>
<protein>
    <recommendedName>
        <fullName evidence="1 4">Endolytic peptidoglycan transglycosylase RlpA</fullName>
        <ecNumber evidence="1 2">4.2.2.-</ecNumber>
    </recommendedName>
    <alternativeName>
        <fullName evidence="3">Rare lipoprotein A</fullName>
    </alternativeName>
</protein>
<name>RLPA_PSEAB</name>